<keyword id="KW-0030">Aminoacyl-tRNA synthetase</keyword>
<keyword id="KW-0067">ATP-binding</keyword>
<keyword id="KW-0963">Cytoplasm</keyword>
<keyword id="KW-0436">Ligase</keyword>
<keyword id="KW-0479">Metal-binding</keyword>
<keyword id="KW-0547">Nucleotide-binding</keyword>
<keyword id="KW-0648">Protein biosynthesis</keyword>
<keyword id="KW-0862">Zinc</keyword>
<comment type="catalytic activity">
    <reaction evidence="1">
        <text>tRNA(Cys) + L-cysteine + ATP = L-cysteinyl-tRNA(Cys) + AMP + diphosphate</text>
        <dbReference type="Rhea" id="RHEA:17773"/>
        <dbReference type="Rhea" id="RHEA-COMP:9661"/>
        <dbReference type="Rhea" id="RHEA-COMP:9679"/>
        <dbReference type="ChEBI" id="CHEBI:30616"/>
        <dbReference type="ChEBI" id="CHEBI:33019"/>
        <dbReference type="ChEBI" id="CHEBI:35235"/>
        <dbReference type="ChEBI" id="CHEBI:78442"/>
        <dbReference type="ChEBI" id="CHEBI:78517"/>
        <dbReference type="ChEBI" id="CHEBI:456215"/>
        <dbReference type="EC" id="6.1.1.16"/>
    </reaction>
</comment>
<comment type="cofactor">
    <cofactor evidence="1">
        <name>Zn(2+)</name>
        <dbReference type="ChEBI" id="CHEBI:29105"/>
    </cofactor>
    <text evidence="1">Binds 1 zinc ion per subunit.</text>
</comment>
<comment type="subunit">
    <text evidence="1">Monomer.</text>
</comment>
<comment type="subcellular location">
    <subcellularLocation>
        <location evidence="1">Cytoplasm</location>
    </subcellularLocation>
</comment>
<comment type="similarity">
    <text evidence="1">Belongs to the class-I aminoacyl-tRNA synthetase family.</text>
</comment>
<comment type="sequence caution" evidence="2">
    <conflict type="erroneous initiation">
        <sequence resource="EMBL-CDS" id="ABM77618"/>
    </conflict>
</comment>
<accession>A2C808</accession>
<organism>
    <name type="scientific">Prochlorococcus marinus (strain MIT 9303)</name>
    <dbReference type="NCBI Taxonomy" id="59922"/>
    <lineage>
        <taxon>Bacteria</taxon>
        <taxon>Bacillati</taxon>
        <taxon>Cyanobacteriota</taxon>
        <taxon>Cyanophyceae</taxon>
        <taxon>Synechococcales</taxon>
        <taxon>Prochlorococcaceae</taxon>
        <taxon>Prochlorococcus</taxon>
    </lineage>
</organism>
<dbReference type="EC" id="6.1.1.16" evidence="1"/>
<dbReference type="EMBL" id="CP000554">
    <property type="protein sequence ID" value="ABM77618.1"/>
    <property type="status" value="ALT_INIT"/>
    <property type="molecule type" value="Genomic_DNA"/>
</dbReference>
<dbReference type="RefSeq" id="WP_236069979.1">
    <property type="nucleotide sequence ID" value="NC_008820.1"/>
</dbReference>
<dbReference type="SMR" id="A2C808"/>
<dbReference type="STRING" id="59922.P9303_08671"/>
<dbReference type="KEGG" id="pmf:P9303_08671"/>
<dbReference type="HOGENOM" id="CLU_013528_0_1_3"/>
<dbReference type="Proteomes" id="UP000002274">
    <property type="component" value="Chromosome"/>
</dbReference>
<dbReference type="GO" id="GO:0005829">
    <property type="term" value="C:cytosol"/>
    <property type="evidence" value="ECO:0007669"/>
    <property type="project" value="TreeGrafter"/>
</dbReference>
<dbReference type="GO" id="GO:0005524">
    <property type="term" value="F:ATP binding"/>
    <property type="evidence" value="ECO:0007669"/>
    <property type="project" value="UniProtKB-UniRule"/>
</dbReference>
<dbReference type="GO" id="GO:0004817">
    <property type="term" value="F:cysteine-tRNA ligase activity"/>
    <property type="evidence" value="ECO:0007669"/>
    <property type="project" value="UniProtKB-UniRule"/>
</dbReference>
<dbReference type="GO" id="GO:0008270">
    <property type="term" value="F:zinc ion binding"/>
    <property type="evidence" value="ECO:0007669"/>
    <property type="project" value="UniProtKB-UniRule"/>
</dbReference>
<dbReference type="GO" id="GO:0006423">
    <property type="term" value="P:cysteinyl-tRNA aminoacylation"/>
    <property type="evidence" value="ECO:0007669"/>
    <property type="project" value="UniProtKB-UniRule"/>
</dbReference>
<dbReference type="CDD" id="cd00672">
    <property type="entry name" value="CysRS_core"/>
    <property type="match status" value="1"/>
</dbReference>
<dbReference type="FunFam" id="3.40.50.620:FF:000009">
    <property type="entry name" value="Cysteine--tRNA ligase"/>
    <property type="match status" value="1"/>
</dbReference>
<dbReference type="Gene3D" id="1.20.120.1910">
    <property type="entry name" value="Cysteine-tRNA ligase, C-terminal anti-codon recognition domain"/>
    <property type="match status" value="1"/>
</dbReference>
<dbReference type="Gene3D" id="3.40.50.620">
    <property type="entry name" value="HUPs"/>
    <property type="match status" value="1"/>
</dbReference>
<dbReference type="HAMAP" id="MF_00041">
    <property type="entry name" value="Cys_tRNA_synth"/>
    <property type="match status" value="1"/>
</dbReference>
<dbReference type="InterPro" id="IPR015803">
    <property type="entry name" value="Cys-tRNA-ligase"/>
</dbReference>
<dbReference type="InterPro" id="IPR015273">
    <property type="entry name" value="Cys-tRNA-synt_Ia_DALR"/>
</dbReference>
<dbReference type="InterPro" id="IPR024909">
    <property type="entry name" value="Cys-tRNA/MSH_ligase"/>
</dbReference>
<dbReference type="InterPro" id="IPR014729">
    <property type="entry name" value="Rossmann-like_a/b/a_fold"/>
</dbReference>
<dbReference type="InterPro" id="IPR032678">
    <property type="entry name" value="tRNA-synt_1_cat_dom"/>
</dbReference>
<dbReference type="InterPro" id="IPR009080">
    <property type="entry name" value="tRNAsynth_Ia_anticodon-bd"/>
</dbReference>
<dbReference type="NCBIfam" id="TIGR00435">
    <property type="entry name" value="cysS"/>
    <property type="match status" value="1"/>
</dbReference>
<dbReference type="PANTHER" id="PTHR10890:SF3">
    <property type="entry name" value="CYSTEINE--TRNA LIGASE, CYTOPLASMIC"/>
    <property type="match status" value="1"/>
</dbReference>
<dbReference type="PANTHER" id="PTHR10890">
    <property type="entry name" value="CYSTEINYL-TRNA SYNTHETASE"/>
    <property type="match status" value="1"/>
</dbReference>
<dbReference type="Pfam" id="PF09190">
    <property type="entry name" value="DALR_2"/>
    <property type="match status" value="1"/>
</dbReference>
<dbReference type="Pfam" id="PF01406">
    <property type="entry name" value="tRNA-synt_1e"/>
    <property type="match status" value="1"/>
</dbReference>
<dbReference type="PRINTS" id="PR00983">
    <property type="entry name" value="TRNASYNTHCYS"/>
</dbReference>
<dbReference type="SMART" id="SM00840">
    <property type="entry name" value="DALR_2"/>
    <property type="match status" value="1"/>
</dbReference>
<dbReference type="SUPFAM" id="SSF47323">
    <property type="entry name" value="Anticodon-binding domain of a subclass of class I aminoacyl-tRNA synthetases"/>
    <property type="match status" value="1"/>
</dbReference>
<dbReference type="SUPFAM" id="SSF52374">
    <property type="entry name" value="Nucleotidylyl transferase"/>
    <property type="match status" value="1"/>
</dbReference>
<evidence type="ECO:0000255" key="1">
    <source>
        <dbReference type="HAMAP-Rule" id="MF_00041"/>
    </source>
</evidence>
<evidence type="ECO:0000305" key="2"/>
<proteinExistence type="inferred from homology"/>
<protein>
    <recommendedName>
        <fullName evidence="1">Cysteine--tRNA ligase</fullName>
        <ecNumber evidence="1">6.1.1.16</ecNumber>
    </recommendedName>
    <alternativeName>
        <fullName evidence="1">Cysteinyl-tRNA synthetase</fullName>
        <shortName evidence="1">CysRS</shortName>
    </alternativeName>
</protein>
<reference key="1">
    <citation type="journal article" date="2007" name="PLoS Genet.">
        <title>Patterns and implications of gene gain and loss in the evolution of Prochlorococcus.</title>
        <authorList>
            <person name="Kettler G.C."/>
            <person name="Martiny A.C."/>
            <person name="Huang K."/>
            <person name="Zucker J."/>
            <person name="Coleman M.L."/>
            <person name="Rodrigue S."/>
            <person name="Chen F."/>
            <person name="Lapidus A."/>
            <person name="Ferriera S."/>
            <person name="Johnson J."/>
            <person name="Steglich C."/>
            <person name="Church G.M."/>
            <person name="Richardson P."/>
            <person name="Chisholm S.W."/>
        </authorList>
    </citation>
    <scope>NUCLEOTIDE SEQUENCE [LARGE SCALE GENOMIC DNA]</scope>
    <source>
        <strain>MIT 9303</strain>
    </source>
</reference>
<name>SYC_PROM3</name>
<feature type="chain" id="PRO_0000332874" description="Cysteine--tRNA ligase">
    <location>
        <begin position="1"/>
        <end position="499"/>
    </location>
</feature>
<feature type="short sequence motif" description="'HIGH' region">
    <location>
        <begin position="31"/>
        <end position="41"/>
    </location>
</feature>
<feature type="short sequence motif" description="'KMSKS' region">
    <location>
        <begin position="270"/>
        <end position="274"/>
    </location>
</feature>
<feature type="binding site" evidence="1">
    <location>
        <position position="29"/>
    </location>
    <ligand>
        <name>Zn(2+)</name>
        <dbReference type="ChEBI" id="CHEBI:29105"/>
    </ligand>
</feature>
<feature type="binding site" evidence="1">
    <location>
        <position position="213"/>
    </location>
    <ligand>
        <name>Zn(2+)</name>
        <dbReference type="ChEBI" id="CHEBI:29105"/>
    </ligand>
</feature>
<feature type="binding site" evidence="1">
    <location>
        <position position="238"/>
    </location>
    <ligand>
        <name>Zn(2+)</name>
        <dbReference type="ChEBI" id="CHEBI:29105"/>
    </ligand>
</feature>
<feature type="binding site" evidence="1">
    <location>
        <position position="242"/>
    </location>
    <ligand>
        <name>Zn(2+)</name>
        <dbReference type="ChEBI" id="CHEBI:29105"/>
    </ligand>
</feature>
<feature type="binding site" evidence="1">
    <location>
        <position position="273"/>
    </location>
    <ligand>
        <name>ATP</name>
        <dbReference type="ChEBI" id="CHEBI:30616"/>
    </ligand>
</feature>
<sequence length="499" mass="55425">MSLRLTNTLTRRTEPFTPLKDGHVSIYCCGVTVYDLCHLGHARSYIAWDVLRRYLLWRGYSVTFVQNFTDIDDKILKRAAEKKCSMEHISEQNIEAFHQDMDALGILRPDRMPRATQCLDGIRALIGELETSGAAYSVDGDVYFAVMKHHGYGKLSGRDLNEQQQNADGRVADAEEARKQHSFDFALWKGAKTGEPSFPSPWGAGRPGWHIECSAMVREELGETIDIHLGGADLIFPHHENEIAQSEAATGKQLARYWLHNGMVNVGGQKMSKSLGNFTTIRALLESGVSPMTLRLFILQAHYRKPLDFTADAINAAATGWKGLNAALGLGNIYAEALNWPECKPLPQEVMQPAHSSTLEQCSEIRQHFIDALDDDLNSSGAIAVLFDLARPLRALANRLERGDTKAIQETAQLNLLPRWQLLVELANVLGLEAEKAAKLAPEGNNRVDENHIQLAIAARKEAKAARDFAKADRIRDELRAQGIELIDKPGGLTDWISS</sequence>
<gene>
    <name evidence="1" type="primary">cysS</name>
    <name type="ordered locus">P9303_08671</name>
</gene>